<gene>
    <name type="primary">RPL15</name>
    <name type="ORF">TTHERM_01289110</name>
</gene>
<dbReference type="EMBL" id="GG662462">
    <property type="protein sequence ID" value="EAR82158.1"/>
    <property type="molecule type" value="Genomic_DNA"/>
</dbReference>
<dbReference type="RefSeq" id="XP_001029813.1">
    <property type="nucleotide sequence ID" value="XM_001029813.3"/>
</dbReference>
<dbReference type="PDB" id="4V8P">
    <property type="method" value="X-ray"/>
    <property type="resolution" value="3.52 A"/>
    <property type="chains" value="BL/CL/EL/GL=1-204"/>
</dbReference>
<dbReference type="PDBsum" id="4V8P"/>
<dbReference type="SMR" id="Q22A30"/>
<dbReference type="FunCoup" id="Q22A30">
    <property type="interactions" value="561"/>
</dbReference>
<dbReference type="IntAct" id="Q22A30">
    <property type="interactions" value="1"/>
</dbReference>
<dbReference type="STRING" id="312017.Q22A30"/>
<dbReference type="EnsemblProtists" id="EAR82158">
    <property type="protein sequence ID" value="EAR82158"/>
    <property type="gene ID" value="TTHERM_01289110"/>
</dbReference>
<dbReference type="GeneID" id="7835734"/>
<dbReference type="KEGG" id="tet:TTHERM_01289110"/>
<dbReference type="eggNOG" id="KOG1678">
    <property type="taxonomic scope" value="Eukaryota"/>
</dbReference>
<dbReference type="HOGENOM" id="CLU_080796_0_0_1"/>
<dbReference type="InParanoid" id="Q22A30"/>
<dbReference type="OMA" id="YIRDAWK"/>
<dbReference type="OrthoDB" id="297231at2759"/>
<dbReference type="Proteomes" id="UP000009168">
    <property type="component" value="Unassembled WGS sequence"/>
</dbReference>
<dbReference type="GO" id="GO:0022625">
    <property type="term" value="C:cytosolic large ribosomal subunit"/>
    <property type="evidence" value="ECO:0007669"/>
    <property type="project" value="TreeGrafter"/>
</dbReference>
<dbReference type="GO" id="GO:0003723">
    <property type="term" value="F:RNA binding"/>
    <property type="evidence" value="ECO:0007669"/>
    <property type="project" value="TreeGrafter"/>
</dbReference>
<dbReference type="GO" id="GO:0003735">
    <property type="term" value="F:structural constituent of ribosome"/>
    <property type="evidence" value="ECO:0007669"/>
    <property type="project" value="InterPro"/>
</dbReference>
<dbReference type="GO" id="GO:0002181">
    <property type="term" value="P:cytoplasmic translation"/>
    <property type="evidence" value="ECO:0007669"/>
    <property type="project" value="TreeGrafter"/>
</dbReference>
<dbReference type="FunFam" id="3.40.1120.10:FF:000001">
    <property type="entry name" value="Ribosomal protein L15"/>
    <property type="match status" value="1"/>
</dbReference>
<dbReference type="Gene3D" id="3.40.1120.10">
    <property type="entry name" value="Ribosomal protein l15e"/>
    <property type="match status" value="1"/>
</dbReference>
<dbReference type="InterPro" id="IPR024794">
    <property type="entry name" value="Rbsml_eL15_core_dom_sf"/>
</dbReference>
<dbReference type="InterPro" id="IPR000439">
    <property type="entry name" value="Ribosomal_eL15"/>
</dbReference>
<dbReference type="InterPro" id="IPR012678">
    <property type="entry name" value="Ribosomal_uL23/eL15/eS24_sf"/>
</dbReference>
<dbReference type="NCBIfam" id="NF003269">
    <property type="entry name" value="PRK04243.1"/>
    <property type="match status" value="1"/>
</dbReference>
<dbReference type="PANTHER" id="PTHR11847:SF4">
    <property type="entry name" value="LARGE RIBOSOMAL SUBUNIT PROTEIN EL15"/>
    <property type="match status" value="1"/>
</dbReference>
<dbReference type="PANTHER" id="PTHR11847">
    <property type="entry name" value="RIBOSOMAL PROTEIN L15"/>
    <property type="match status" value="1"/>
</dbReference>
<dbReference type="Pfam" id="PF00827">
    <property type="entry name" value="Ribosomal_L15e"/>
    <property type="match status" value="1"/>
</dbReference>
<dbReference type="SMART" id="SM01384">
    <property type="entry name" value="Ribosomal_L15e"/>
    <property type="match status" value="1"/>
</dbReference>
<dbReference type="SUPFAM" id="SSF54189">
    <property type="entry name" value="Ribosomal proteins S24e, L23 and L15e"/>
    <property type="match status" value="1"/>
</dbReference>
<comment type="similarity">
    <text evidence="1">Belongs to the eukaryotic ribosomal protein eL15 family.</text>
</comment>
<feature type="chain" id="PRO_0000413499" description="Large ribosomal subunit protein eL15">
    <location>
        <begin position="1"/>
        <end position="204"/>
    </location>
</feature>
<accession>Q22A30</accession>
<reference key="1">
    <citation type="journal article" date="2006" name="PLoS Biol.">
        <title>Macronuclear genome sequence of the ciliate Tetrahymena thermophila, a model eukaryote.</title>
        <authorList>
            <person name="Eisen J.A."/>
            <person name="Coyne R.S."/>
            <person name="Wu M."/>
            <person name="Wu D."/>
            <person name="Thiagarajan M."/>
            <person name="Wortman J.R."/>
            <person name="Badger J.H."/>
            <person name="Ren Q."/>
            <person name="Amedeo P."/>
            <person name="Jones K.M."/>
            <person name="Tallon L.J."/>
            <person name="Delcher A.L."/>
            <person name="Salzberg S.L."/>
            <person name="Silva J.C."/>
            <person name="Haas B.J."/>
            <person name="Majoros W.H."/>
            <person name="Farzad M."/>
            <person name="Carlton J.M."/>
            <person name="Smith R.K. Jr."/>
            <person name="Garg J."/>
            <person name="Pearlman R.E."/>
            <person name="Karrer K.M."/>
            <person name="Sun L."/>
            <person name="Manning G."/>
            <person name="Elde N.C."/>
            <person name="Turkewitz A.P."/>
            <person name="Asai D.J."/>
            <person name="Wilkes D.E."/>
            <person name="Wang Y."/>
            <person name="Cai H."/>
            <person name="Collins K."/>
            <person name="Stewart B.A."/>
            <person name="Lee S.R."/>
            <person name="Wilamowska K."/>
            <person name="Weinberg Z."/>
            <person name="Ruzzo W.L."/>
            <person name="Wloga D."/>
            <person name="Gaertig J."/>
            <person name="Frankel J."/>
            <person name="Tsao C.-C."/>
            <person name="Gorovsky M.A."/>
            <person name="Keeling P.J."/>
            <person name="Waller R.F."/>
            <person name="Patron N.J."/>
            <person name="Cherry J.M."/>
            <person name="Stover N.A."/>
            <person name="Krieger C.J."/>
            <person name="del Toro C."/>
            <person name="Ryder H.F."/>
            <person name="Williamson S.C."/>
            <person name="Barbeau R.A."/>
            <person name="Hamilton E.P."/>
            <person name="Orias E."/>
        </authorList>
    </citation>
    <scope>NUCLEOTIDE SEQUENCE [LARGE SCALE GENOMIC DNA]</scope>
    <source>
        <strain>SB210</strain>
    </source>
</reference>
<organism>
    <name type="scientific">Tetrahymena thermophila (strain SB210)</name>
    <dbReference type="NCBI Taxonomy" id="312017"/>
    <lineage>
        <taxon>Eukaryota</taxon>
        <taxon>Sar</taxon>
        <taxon>Alveolata</taxon>
        <taxon>Ciliophora</taxon>
        <taxon>Intramacronucleata</taxon>
        <taxon>Oligohymenophorea</taxon>
        <taxon>Hymenostomatida</taxon>
        <taxon>Tetrahymenina</taxon>
        <taxon>Tetrahymenidae</taxon>
        <taxon>Tetrahymena</taxon>
    </lineage>
</organism>
<name>RL15_TETTS</name>
<sequence length="204" mass="24076">MGAYKYLEELWRKKQSDLMSFILRLRTWEYRQLPVIHKASRSSRPDKARKLGYKNKDGYAIWRVRVRRGGRKRPVSKGIVYGKPSSVGINQLKFARNLRSCAEERVGKRVPELRVLNSYWVGQDGTYKFYEVILADPSHNAIRNDPRINWICESAHKHRELRGLTSAGRKGRGLRVKGHRAKSLRTSRKGNWRARQMLKLRRYR</sequence>
<protein>
    <recommendedName>
        <fullName evidence="1">Large ribosomal subunit protein eL15</fullName>
    </recommendedName>
    <alternativeName>
        <fullName>60S ribosomal protein L15</fullName>
    </alternativeName>
</protein>
<keyword id="KW-0002">3D-structure</keyword>
<keyword id="KW-1185">Reference proteome</keyword>
<keyword id="KW-0687">Ribonucleoprotein</keyword>
<keyword id="KW-0689">Ribosomal protein</keyword>
<proteinExistence type="evidence at protein level"/>
<evidence type="ECO:0000305" key="1"/>